<feature type="chain" id="PRO_1000198135" description="Trigger factor">
    <location>
        <begin position="1"/>
        <end position="495"/>
    </location>
</feature>
<feature type="domain" description="PPIase FKBP-type" evidence="1">
    <location>
        <begin position="169"/>
        <end position="254"/>
    </location>
</feature>
<feature type="region of interest" description="Disordered" evidence="2">
    <location>
        <begin position="439"/>
        <end position="495"/>
    </location>
</feature>
<evidence type="ECO:0000255" key="1">
    <source>
        <dbReference type="HAMAP-Rule" id="MF_00303"/>
    </source>
</evidence>
<evidence type="ECO:0000256" key="2">
    <source>
        <dbReference type="SAM" id="MobiDB-lite"/>
    </source>
</evidence>
<proteinExistence type="inferred from homology"/>
<protein>
    <recommendedName>
        <fullName evidence="1">Trigger factor</fullName>
        <shortName evidence="1">TF</shortName>
        <ecNumber evidence="1">5.2.1.8</ecNumber>
    </recommendedName>
    <alternativeName>
        <fullName evidence="1">PPIase</fullName>
    </alternativeName>
</protein>
<dbReference type="EC" id="5.2.1.8" evidence="1"/>
<dbReference type="EMBL" id="CP000628">
    <property type="protein sequence ID" value="ACM26407.1"/>
    <property type="molecule type" value="Genomic_DNA"/>
</dbReference>
<dbReference type="RefSeq" id="WP_012651321.1">
    <property type="nucleotide sequence ID" value="NC_011985.1"/>
</dbReference>
<dbReference type="SMR" id="B9JEI6"/>
<dbReference type="STRING" id="311403.Arad_2148"/>
<dbReference type="KEGG" id="ara:Arad_2148"/>
<dbReference type="eggNOG" id="COG0544">
    <property type="taxonomic scope" value="Bacteria"/>
</dbReference>
<dbReference type="HOGENOM" id="CLU_033058_2_2_5"/>
<dbReference type="Proteomes" id="UP000001600">
    <property type="component" value="Chromosome 1"/>
</dbReference>
<dbReference type="GO" id="GO:0005737">
    <property type="term" value="C:cytoplasm"/>
    <property type="evidence" value="ECO:0007669"/>
    <property type="project" value="UniProtKB-SubCell"/>
</dbReference>
<dbReference type="GO" id="GO:0003755">
    <property type="term" value="F:peptidyl-prolyl cis-trans isomerase activity"/>
    <property type="evidence" value="ECO:0007669"/>
    <property type="project" value="UniProtKB-UniRule"/>
</dbReference>
<dbReference type="GO" id="GO:0044183">
    <property type="term" value="F:protein folding chaperone"/>
    <property type="evidence" value="ECO:0007669"/>
    <property type="project" value="TreeGrafter"/>
</dbReference>
<dbReference type="GO" id="GO:0043022">
    <property type="term" value="F:ribosome binding"/>
    <property type="evidence" value="ECO:0007669"/>
    <property type="project" value="TreeGrafter"/>
</dbReference>
<dbReference type="GO" id="GO:0051083">
    <property type="term" value="P:'de novo' cotranslational protein folding"/>
    <property type="evidence" value="ECO:0007669"/>
    <property type="project" value="TreeGrafter"/>
</dbReference>
<dbReference type="GO" id="GO:0051301">
    <property type="term" value="P:cell division"/>
    <property type="evidence" value="ECO:0007669"/>
    <property type="project" value="UniProtKB-KW"/>
</dbReference>
<dbReference type="GO" id="GO:0061077">
    <property type="term" value="P:chaperone-mediated protein folding"/>
    <property type="evidence" value="ECO:0007669"/>
    <property type="project" value="TreeGrafter"/>
</dbReference>
<dbReference type="GO" id="GO:0015031">
    <property type="term" value="P:protein transport"/>
    <property type="evidence" value="ECO:0007669"/>
    <property type="project" value="UniProtKB-UniRule"/>
</dbReference>
<dbReference type="GO" id="GO:0043335">
    <property type="term" value="P:protein unfolding"/>
    <property type="evidence" value="ECO:0007669"/>
    <property type="project" value="TreeGrafter"/>
</dbReference>
<dbReference type="FunFam" id="3.10.50.40:FF:000001">
    <property type="entry name" value="Trigger factor"/>
    <property type="match status" value="1"/>
</dbReference>
<dbReference type="Gene3D" id="3.10.50.40">
    <property type="match status" value="1"/>
</dbReference>
<dbReference type="Gene3D" id="3.30.70.1050">
    <property type="entry name" value="Trigger factor ribosome-binding domain"/>
    <property type="match status" value="1"/>
</dbReference>
<dbReference type="Gene3D" id="1.10.3120.10">
    <property type="entry name" value="Trigger factor, C-terminal domain"/>
    <property type="match status" value="1"/>
</dbReference>
<dbReference type="HAMAP" id="MF_00303">
    <property type="entry name" value="Trigger_factor_Tig"/>
    <property type="match status" value="1"/>
</dbReference>
<dbReference type="InterPro" id="IPR046357">
    <property type="entry name" value="PPIase_dom_sf"/>
</dbReference>
<dbReference type="InterPro" id="IPR001179">
    <property type="entry name" value="PPIase_FKBP_dom"/>
</dbReference>
<dbReference type="InterPro" id="IPR005215">
    <property type="entry name" value="Trig_fac"/>
</dbReference>
<dbReference type="InterPro" id="IPR008880">
    <property type="entry name" value="Trigger_fac_C"/>
</dbReference>
<dbReference type="InterPro" id="IPR037041">
    <property type="entry name" value="Trigger_fac_C_sf"/>
</dbReference>
<dbReference type="InterPro" id="IPR008881">
    <property type="entry name" value="Trigger_fac_ribosome-bd_bac"/>
</dbReference>
<dbReference type="InterPro" id="IPR036611">
    <property type="entry name" value="Trigger_fac_ribosome-bd_sf"/>
</dbReference>
<dbReference type="InterPro" id="IPR027304">
    <property type="entry name" value="Trigger_fact/SurA_dom_sf"/>
</dbReference>
<dbReference type="NCBIfam" id="TIGR00115">
    <property type="entry name" value="tig"/>
    <property type="match status" value="1"/>
</dbReference>
<dbReference type="PANTHER" id="PTHR30560">
    <property type="entry name" value="TRIGGER FACTOR CHAPERONE AND PEPTIDYL-PROLYL CIS/TRANS ISOMERASE"/>
    <property type="match status" value="1"/>
</dbReference>
<dbReference type="PANTHER" id="PTHR30560:SF3">
    <property type="entry name" value="TRIGGER FACTOR-LIKE PROTEIN TIG, CHLOROPLASTIC"/>
    <property type="match status" value="1"/>
</dbReference>
<dbReference type="Pfam" id="PF00254">
    <property type="entry name" value="FKBP_C"/>
    <property type="match status" value="1"/>
</dbReference>
<dbReference type="Pfam" id="PF05698">
    <property type="entry name" value="Trigger_C"/>
    <property type="match status" value="1"/>
</dbReference>
<dbReference type="Pfam" id="PF05697">
    <property type="entry name" value="Trigger_N"/>
    <property type="match status" value="1"/>
</dbReference>
<dbReference type="PIRSF" id="PIRSF003095">
    <property type="entry name" value="Trigger_factor"/>
    <property type="match status" value="1"/>
</dbReference>
<dbReference type="SUPFAM" id="SSF54534">
    <property type="entry name" value="FKBP-like"/>
    <property type="match status" value="1"/>
</dbReference>
<dbReference type="SUPFAM" id="SSF109998">
    <property type="entry name" value="Triger factor/SurA peptide-binding domain-like"/>
    <property type="match status" value="1"/>
</dbReference>
<dbReference type="SUPFAM" id="SSF102735">
    <property type="entry name" value="Trigger factor ribosome-binding domain"/>
    <property type="match status" value="1"/>
</dbReference>
<dbReference type="PROSITE" id="PS50059">
    <property type="entry name" value="FKBP_PPIASE"/>
    <property type="match status" value="1"/>
</dbReference>
<sequence length="495" mass="54600">MQVIETLAEGLKREIKVVISAKDMEGRMNERLAEVKDKVRINGFRPGKVPVSHLKKVYGKSIMADLVNEIVRDQPPAILTERGEKSATQPEVAMTEDKDEAEKILAAEADFEFTLSYEVIPAIELKSVKGVKVTREVAEIGEDEVTEQILKIAESARSYEAKKGKAADGDRVTIDYLGKVDGVAFDGGKDEDSQLVIGSNRFIPGFEEQLVGVKAGDEKTITVTFPAEYPAKNLAGKEATFDITVKEVAAPGEVEINDELASKLGLESADRLKEIVRGQIESQYGSVTRQKVKRQILDQLDEMYQFDTPQKLVDAEFASIWRQIQTDLAESGKTFEDEDTTEEKAREEYRKLAERRVRLGLVLSEIGEKAGVEVSEDELQRALYAQLQQFPGQEKEILDFFRNTPGASANLRAPIFEEKVIDHLLTEVDVTDKTVSKEALLADDESEDKPAAKKAAPKKKAAKAEATEAAAEGEEAAVPKKKAAPKKKAAEDSAE</sequence>
<accession>B9JEI6</accession>
<reference key="1">
    <citation type="journal article" date="2009" name="J. Bacteriol.">
        <title>Genome sequences of three Agrobacterium biovars help elucidate the evolution of multichromosome genomes in bacteria.</title>
        <authorList>
            <person name="Slater S.C."/>
            <person name="Goldman B.S."/>
            <person name="Goodner B."/>
            <person name="Setubal J.C."/>
            <person name="Farrand S.K."/>
            <person name="Nester E.W."/>
            <person name="Burr T.J."/>
            <person name="Banta L."/>
            <person name="Dickerman A.W."/>
            <person name="Paulsen I."/>
            <person name="Otten L."/>
            <person name="Suen G."/>
            <person name="Welch R."/>
            <person name="Almeida N.F."/>
            <person name="Arnold F."/>
            <person name="Burton O.T."/>
            <person name="Du Z."/>
            <person name="Ewing A."/>
            <person name="Godsy E."/>
            <person name="Heisel S."/>
            <person name="Houmiel K.L."/>
            <person name="Jhaveri J."/>
            <person name="Lu J."/>
            <person name="Miller N.M."/>
            <person name="Norton S."/>
            <person name="Chen Q."/>
            <person name="Phoolcharoen W."/>
            <person name="Ohlin V."/>
            <person name="Ondrusek D."/>
            <person name="Pride N."/>
            <person name="Stricklin S.L."/>
            <person name="Sun J."/>
            <person name="Wheeler C."/>
            <person name="Wilson L."/>
            <person name="Zhu H."/>
            <person name="Wood D.W."/>
        </authorList>
    </citation>
    <scope>NUCLEOTIDE SEQUENCE [LARGE SCALE GENOMIC DNA]</scope>
    <source>
        <strain>K84 / ATCC BAA-868</strain>
    </source>
</reference>
<gene>
    <name evidence="1" type="primary">tig</name>
    <name type="ordered locus">Arad_2148</name>
</gene>
<organism>
    <name type="scientific">Rhizobium rhizogenes (strain K84 / ATCC BAA-868)</name>
    <name type="common">Agrobacterium radiobacter</name>
    <dbReference type="NCBI Taxonomy" id="311403"/>
    <lineage>
        <taxon>Bacteria</taxon>
        <taxon>Pseudomonadati</taxon>
        <taxon>Pseudomonadota</taxon>
        <taxon>Alphaproteobacteria</taxon>
        <taxon>Hyphomicrobiales</taxon>
        <taxon>Rhizobiaceae</taxon>
        <taxon>Rhizobium/Agrobacterium group</taxon>
        <taxon>Rhizobium</taxon>
    </lineage>
</organism>
<name>TIG_RHIR8</name>
<comment type="function">
    <text evidence="1">Involved in protein export. Acts as a chaperone by maintaining the newly synthesized protein in an open conformation. Functions as a peptidyl-prolyl cis-trans isomerase.</text>
</comment>
<comment type="catalytic activity">
    <reaction evidence="1">
        <text>[protein]-peptidylproline (omega=180) = [protein]-peptidylproline (omega=0)</text>
        <dbReference type="Rhea" id="RHEA:16237"/>
        <dbReference type="Rhea" id="RHEA-COMP:10747"/>
        <dbReference type="Rhea" id="RHEA-COMP:10748"/>
        <dbReference type="ChEBI" id="CHEBI:83833"/>
        <dbReference type="ChEBI" id="CHEBI:83834"/>
        <dbReference type="EC" id="5.2.1.8"/>
    </reaction>
</comment>
<comment type="subcellular location">
    <subcellularLocation>
        <location>Cytoplasm</location>
    </subcellularLocation>
    <text evidence="1">About half TF is bound to the ribosome near the polypeptide exit tunnel while the other half is free in the cytoplasm.</text>
</comment>
<comment type="domain">
    <text evidence="1">Consists of 3 domains; the N-terminus binds the ribosome, the middle domain has PPIase activity, while the C-terminus has intrinsic chaperone activity on its own.</text>
</comment>
<comment type="similarity">
    <text evidence="1">Belongs to the FKBP-type PPIase family. Tig subfamily.</text>
</comment>
<keyword id="KW-0131">Cell cycle</keyword>
<keyword id="KW-0132">Cell division</keyword>
<keyword id="KW-0143">Chaperone</keyword>
<keyword id="KW-0963">Cytoplasm</keyword>
<keyword id="KW-0413">Isomerase</keyword>
<keyword id="KW-0697">Rotamase</keyword>